<sequence length="352" mass="39458">MQVSDFHFELPDELIARYPKAERTASRLLQLDGNSGQLVDGTFKDVLELVEPGDLLVFNNTRVIPARMFGRKASGGKLEVLVERMLDEHTILAHVRSSKPPKPGTELYLGENDEFHAVMQARHDALFEIRFTAETVVLDILNQIGHMPLPPYIDRPDEEADKERYQTVYNQKPGAVAAPTAGLHFDQALLEQIQAKGVELAYVTLHVGAGTFQPVRVENIHDHHMHAEYVEVPQEVVDAITATKARGGRVVAVGTTSVRSLESAAQDALQKGTELKPFFGDTEIFIFPGYQYQLVDCLITNFHLPESTLIMLVSAFAGYEHTMAAYEHAVKEQYRFFSYGDAMFIRKQMTKA</sequence>
<comment type="function">
    <text evidence="1">Transfers and isomerizes the ribose moiety from AdoMet to the 7-aminomethyl group of 7-deazaguanine (preQ1-tRNA) to give epoxyqueuosine (oQ-tRNA).</text>
</comment>
<comment type="catalytic activity">
    <reaction evidence="1">
        <text>7-aminomethyl-7-carbaguanosine(34) in tRNA + S-adenosyl-L-methionine = epoxyqueuosine(34) in tRNA + adenine + L-methionine + 2 H(+)</text>
        <dbReference type="Rhea" id="RHEA:32155"/>
        <dbReference type="Rhea" id="RHEA-COMP:10342"/>
        <dbReference type="Rhea" id="RHEA-COMP:18582"/>
        <dbReference type="ChEBI" id="CHEBI:15378"/>
        <dbReference type="ChEBI" id="CHEBI:16708"/>
        <dbReference type="ChEBI" id="CHEBI:57844"/>
        <dbReference type="ChEBI" id="CHEBI:59789"/>
        <dbReference type="ChEBI" id="CHEBI:82833"/>
        <dbReference type="ChEBI" id="CHEBI:194443"/>
        <dbReference type="EC" id="2.4.99.17"/>
    </reaction>
</comment>
<comment type="pathway">
    <text evidence="1">tRNA modification; tRNA-queuosine biosynthesis.</text>
</comment>
<comment type="subunit">
    <text evidence="1">Monomer.</text>
</comment>
<comment type="subcellular location">
    <subcellularLocation>
        <location evidence="1">Cytoplasm</location>
    </subcellularLocation>
</comment>
<comment type="similarity">
    <text evidence="1">Belongs to the QueA family.</text>
</comment>
<protein>
    <recommendedName>
        <fullName evidence="1">S-adenosylmethionine:tRNA ribosyltransferase-isomerase</fullName>
        <ecNumber evidence="1">2.4.99.17</ecNumber>
    </recommendedName>
    <alternativeName>
        <fullName evidence="1">Queuosine biosynthesis protein QueA</fullName>
    </alternativeName>
</protein>
<feature type="chain" id="PRO_1000119165" description="S-adenosylmethionine:tRNA ribosyltransferase-isomerase">
    <location>
        <begin position="1"/>
        <end position="352"/>
    </location>
</feature>
<keyword id="KW-0963">Cytoplasm</keyword>
<keyword id="KW-0671">Queuosine biosynthesis</keyword>
<keyword id="KW-0949">S-adenosyl-L-methionine</keyword>
<keyword id="KW-0808">Transferase</keyword>
<organism>
    <name type="scientific">Vibrio cholerae serotype O1 (strain M66-2)</name>
    <dbReference type="NCBI Taxonomy" id="579112"/>
    <lineage>
        <taxon>Bacteria</taxon>
        <taxon>Pseudomonadati</taxon>
        <taxon>Pseudomonadota</taxon>
        <taxon>Gammaproteobacteria</taxon>
        <taxon>Vibrionales</taxon>
        <taxon>Vibrionaceae</taxon>
        <taxon>Vibrio</taxon>
    </lineage>
</organism>
<proteinExistence type="inferred from homology"/>
<dbReference type="EC" id="2.4.99.17" evidence="1"/>
<dbReference type="EMBL" id="CP001233">
    <property type="protein sequence ID" value="ACP05018.1"/>
    <property type="molecule type" value="Genomic_DNA"/>
</dbReference>
<dbReference type="RefSeq" id="WP_001198115.1">
    <property type="nucleotide sequence ID" value="NC_012578.1"/>
</dbReference>
<dbReference type="SMR" id="C3LSZ2"/>
<dbReference type="KEGG" id="vcm:VCM66_0697"/>
<dbReference type="HOGENOM" id="CLU_039110_1_0_6"/>
<dbReference type="UniPathway" id="UPA00392"/>
<dbReference type="Proteomes" id="UP000001217">
    <property type="component" value="Chromosome I"/>
</dbReference>
<dbReference type="GO" id="GO:0005737">
    <property type="term" value="C:cytoplasm"/>
    <property type="evidence" value="ECO:0007669"/>
    <property type="project" value="UniProtKB-SubCell"/>
</dbReference>
<dbReference type="GO" id="GO:0051075">
    <property type="term" value="F:S-adenosylmethionine:tRNA ribosyltransferase-isomerase activity"/>
    <property type="evidence" value="ECO:0007669"/>
    <property type="project" value="UniProtKB-EC"/>
</dbReference>
<dbReference type="GO" id="GO:0008616">
    <property type="term" value="P:queuosine biosynthetic process"/>
    <property type="evidence" value="ECO:0007669"/>
    <property type="project" value="UniProtKB-UniRule"/>
</dbReference>
<dbReference type="GO" id="GO:0002099">
    <property type="term" value="P:tRNA wobble guanine modification"/>
    <property type="evidence" value="ECO:0007669"/>
    <property type="project" value="TreeGrafter"/>
</dbReference>
<dbReference type="FunFam" id="2.40.10.240:FF:000001">
    <property type="entry name" value="S-adenosylmethionine:tRNA ribosyltransferase-isomerase"/>
    <property type="match status" value="1"/>
</dbReference>
<dbReference type="FunFam" id="3.40.1780.10:FF:000001">
    <property type="entry name" value="S-adenosylmethionine:tRNA ribosyltransferase-isomerase"/>
    <property type="match status" value="1"/>
</dbReference>
<dbReference type="Gene3D" id="2.40.10.240">
    <property type="entry name" value="QueA-like"/>
    <property type="match status" value="1"/>
</dbReference>
<dbReference type="Gene3D" id="3.40.1780.10">
    <property type="entry name" value="QueA-like"/>
    <property type="match status" value="1"/>
</dbReference>
<dbReference type="HAMAP" id="MF_00113">
    <property type="entry name" value="QueA"/>
    <property type="match status" value="1"/>
</dbReference>
<dbReference type="InterPro" id="IPR003699">
    <property type="entry name" value="QueA"/>
</dbReference>
<dbReference type="InterPro" id="IPR042118">
    <property type="entry name" value="QueA_dom1"/>
</dbReference>
<dbReference type="InterPro" id="IPR042119">
    <property type="entry name" value="QueA_dom2"/>
</dbReference>
<dbReference type="InterPro" id="IPR036100">
    <property type="entry name" value="QueA_sf"/>
</dbReference>
<dbReference type="NCBIfam" id="NF001140">
    <property type="entry name" value="PRK00147.1"/>
    <property type="match status" value="1"/>
</dbReference>
<dbReference type="NCBIfam" id="TIGR00113">
    <property type="entry name" value="queA"/>
    <property type="match status" value="1"/>
</dbReference>
<dbReference type="PANTHER" id="PTHR30307">
    <property type="entry name" value="S-ADENOSYLMETHIONINE:TRNA RIBOSYLTRANSFERASE-ISOMERASE"/>
    <property type="match status" value="1"/>
</dbReference>
<dbReference type="PANTHER" id="PTHR30307:SF0">
    <property type="entry name" value="S-ADENOSYLMETHIONINE:TRNA RIBOSYLTRANSFERASE-ISOMERASE"/>
    <property type="match status" value="1"/>
</dbReference>
<dbReference type="Pfam" id="PF02547">
    <property type="entry name" value="Queuosine_synth"/>
    <property type="match status" value="1"/>
</dbReference>
<dbReference type="SUPFAM" id="SSF111337">
    <property type="entry name" value="QueA-like"/>
    <property type="match status" value="1"/>
</dbReference>
<name>QUEA_VIBCM</name>
<accession>C3LSZ2</accession>
<reference key="1">
    <citation type="journal article" date="2008" name="PLoS ONE">
        <title>A recalibrated molecular clock and independent origins for the cholera pandemic clones.</title>
        <authorList>
            <person name="Feng L."/>
            <person name="Reeves P.R."/>
            <person name="Lan R."/>
            <person name="Ren Y."/>
            <person name="Gao C."/>
            <person name="Zhou Z."/>
            <person name="Ren Y."/>
            <person name="Cheng J."/>
            <person name="Wang W."/>
            <person name="Wang J."/>
            <person name="Qian W."/>
            <person name="Li D."/>
            <person name="Wang L."/>
        </authorList>
    </citation>
    <scope>NUCLEOTIDE SEQUENCE [LARGE SCALE GENOMIC DNA]</scope>
    <source>
        <strain>M66-2</strain>
    </source>
</reference>
<gene>
    <name evidence="1" type="primary">queA</name>
    <name type="ordered locus">VCM66_0697</name>
</gene>
<evidence type="ECO:0000255" key="1">
    <source>
        <dbReference type="HAMAP-Rule" id="MF_00113"/>
    </source>
</evidence>